<name>QSEB_HAEIN</name>
<keyword id="KW-0963">Cytoplasm</keyword>
<keyword id="KW-0238">DNA-binding</keyword>
<keyword id="KW-0597">Phosphoprotein</keyword>
<keyword id="KW-1185">Reference proteome</keyword>
<keyword id="KW-0804">Transcription</keyword>
<keyword id="KW-0805">Transcription regulation</keyword>
<keyword id="KW-0902">Two-component regulatory system</keyword>
<gene>
    <name type="primary">qseB</name>
    <name type="ordered locus">HI_1708</name>
</gene>
<dbReference type="EMBL" id="L42023">
    <property type="protein sequence ID" value="AAC23354.1"/>
    <property type="molecule type" value="Genomic_DNA"/>
</dbReference>
<dbReference type="PIR" id="F64137">
    <property type="entry name" value="F64137"/>
</dbReference>
<dbReference type="RefSeq" id="NP_439850.1">
    <property type="nucleotide sequence ID" value="NC_000907.1"/>
</dbReference>
<dbReference type="SMR" id="P45337"/>
<dbReference type="STRING" id="71421.HI_1708"/>
<dbReference type="EnsemblBacteria" id="AAC23354">
    <property type="protein sequence ID" value="AAC23354"/>
    <property type="gene ID" value="HI_1708"/>
</dbReference>
<dbReference type="KEGG" id="hin:HI_1708"/>
<dbReference type="PATRIC" id="fig|71421.8.peg.1787"/>
<dbReference type="eggNOG" id="COG0745">
    <property type="taxonomic scope" value="Bacteria"/>
</dbReference>
<dbReference type="HOGENOM" id="CLU_000445_30_1_6"/>
<dbReference type="OrthoDB" id="9802426at2"/>
<dbReference type="PhylomeDB" id="P45337"/>
<dbReference type="BioCyc" id="HINF71421:G1GJ1-1724-MONOMER"/>
<dbReference type="Proteomes" id="UP000000579">
    <property type="component" value="Chromosome"/>
</dbReference>
<dbReference type="GO" id="GO:0005829">
    <property type="term" value="C:cytosol"/>
    <property type="evidence" value="ECO:0000318"/>
    <property type="project" value="GO_Central"/>
</dbReference>
<dbReference type="GO" id="GO:0032993">
    <property type="term" value="C:protein-DNA complex"/>
    <property type="evidence" value="ECO:0000318"/>
    <property type="project" value="GO_Central"/>
</dbReference>
<dbReference type="GO" id="GO:0000156">
    <property type="term" value="F:phosphorelay response regulator activity"/>
    <property type="evidence" value="ECO:0000318"/>
    <property type="project" value="GO_Central"/>
</dbReference>
<dbReference type="GO" id="GO:0000976">
    <property type="term" value="F:transcription cis-regulatory region binding"/>
    <property type="evidence" value="ECO:0000318"/>
    <property type="project" value="GO_Central"/>
</dbReference>
<dbReference type="GO" id="GO:0006355">
    <property type="term" value="P:regulation of DNA-templated transcription"/>
    <property type="evidence" value="ECO:0000318"/>
    <property type="project" value="GO_Central"/>
</dbReference>
<dbReference type="CDD" id="cd17624">
    <property type="entry name" value="REC_OmpR_PmrA-like"/>
    <property type="match status" value="1"/>
</dbReference>
<dbReference type="CDD" id="cd00383">
    <property type="entry name" value="trans_reg_C"/>
    <property type="match status" value="1"/>
</dbReference>
<dbReference type="FunFam" id="3.40.50.2300:FF:000002">
    <property type="entry name" value="DNA-binding response regulator PhoP"/>
    <property type="match status" value="1"/>
</dbReference>
<dbReference type="Gene3D" id="3.40.50.2300">
    <property type="match status" value="1"/>
</dbReference>
<dbReference type="Gene3D" id="6.10.250.690">
    <property type="match status" value="1"/>
</dbReference>
<dbReference type="Gene3D" id="1.10.10.10">
    <property type="entry name" value="Winged helix-like DNA-binding domain superfamily/Winged helix DNA-binding domain"/>
    <property type="match status" value="1"/>
</dbReference>
<dbReference type="InterPro" id="IPR011006">
    <property type="entry name" value="CheY-like_superfamily"/>
</dbReference>
<dbReference type="InterPro" id="IPR001867">
    <property type="entry name" value="OmpR/PhoB-type_DNA-bd"/>
</dbReference>
<dbReference type="InterPro" id="IPR001789">
    <property type="entry name" value="Sig_transdc_resp-reg_receiver"/>
</dbReference>
<dbReference type="InterPro" id="IPR039420">
    <property type="entry name" value="WalR-like"/>
</dbReference>
<dbReference type="InterPro" id="IPR036388">
    <property type="entry name" value="WH-like_DNA-bd_sf"/>
</dbReference>
<dbReference type="PANTHER" id="PTHR48111">
    <property type="entry name" value="REGULATOR OF RPOS"/>
    <property type="match status" value="1"/>
</dbReference>
<dbReference type="PANTHER" id="PTHR48111:SF35">
    <property type="entry name" value="TRANSCRIPTIONAL REGULATORY PROTEIN QSEB"/>
    <property type="match status" value="1"/>
</dbReference>
<dbReference type="Pfam" id="PF00072">
    <property type="entry name" value="Response_reg"/>
    <property type="match status" value="1"/>
</dbReference>
<dbReference type="Pfam" id="PF00486">
    <property type="entry name" value="Trans_reg_C"/>
    <property type="match status" value="1"/>
</dbReference>
<dbReference type="SMART" id="SM00448">
    <property type="entry name" value="REC"/>
    <property type="match status" value="1"/>
</dbReference>
<dbReference type="SMART" id="SM00862">
    <property type="entry name" value="Trans_reg_C"/>
    <property type="match status" value="1"/>
</dbReference>
<dbReference type="SUPFAM" id="SSF52172">
    <property type="entry name" value="CheY-like"/>
    <property type="match status" value="1"/>
</dbReference>
<dbReference type="PROSITE" id="PS51755">
    <property type="entry name" value="OMPR_PHOB"/>
    <property type="match status" value="1"/>
</dbReference>
<dbReference type="PROSITE" id="PS50110">
    <property type="entry name" value="RESPONSE_REGULATORY"/>
    <property type="match status" value="1"/>
</dbReference>
<protein>
    <recommendedName>
        <fullName>Transcriptional regulatory protein QseB</fullName>
    </recommendedName>
</protein>
<accession>P45337</accession>
<proteinExistence type="inferred from homology"/>
<comment type="function">
    <text>Member of a two-component regulatory system QseB/QseC.</text>
</comment>
<comment type="subcellular location">
    <subcellularLocation>
        <location evidence="3">Cytoplasm</location>
    </subcellularLocation>
</comment>
<comment type="PTM">
    <text evidence="3">Phosphorylated by QseC.</text>
</comment>
<reference key="1">
    <citation type="journal article" date="1995" name="Science">
        <title>Whole-genome random sequencing and assembly of Haemophilus influenzae Rd.</title>
        <authorList>
            <person name="Fleischmann R.D."/>
            <person name="Adams M.D."/>
            <person name="White O."/>
            <person name="Clayton R.A."/>
            <person name="Kirkness E.F."/>
            <person name="Kerlavage A.R."/>
            <person name="Bult C.J."/>
            <person name="Tomb J.-F."/>
            <person name="Dougherty B.A."/>
            <person name="Merrick J.M."/>
            <person name="McKenney K."/>
            <person name="Sutton G.G."/>
            <person name="FitzHugh W."/>
            <person name="Fields C.A."/>
            <person name="Gocayne J.D."/>
            <person name="Scott J.D."/>
            <person name="Shirley R."/>
            <person name="Liu L.-I."/>
            <person name="Glodek A."/>
            <person name="Kelley J.M."/>
            <person name="Weidman J.F."/>
            <person name="Phillips C.A."/>
            <person name="Spriggs T."/>
            <person name="Hedblom E."/>
            <person name="Cotton M.D."/>
            <person name="Utterback T.R."/>
            <person name="Hanna M.C."/>
            <person name="Nguyen D.T."/>
            <person name="Saudek D.M."/>
            <person name="Brandon R.C."/>
            <person name="Fine L.D."/>
            <person name="Fritchman J.L."/>
            <person name="Fuhrmann J.L."/>
            <person name="Geoghagen N.S.M."/>
            <person name="Gnehm C.L."/>
            <person name="McDonald L.A."/>
            <person name="Small K.V."/>
            <person name="Fraser C.M."/>
            <person name="Smith H.O."/>
            <person name="Venter J.C."/>
        </authorList>
    </citation>
    <scope>NUCLEOTIDE SEQUENCE [LARGE SCALE GENOMIC DNA]</scope>
    <source>
        <strain>ATCC 51907 / DSM 11121 / KW20 / Rd</strain>
    </source>
</reference>
<organism>
    <name type="scientific">Haemophilus influenzae (strain ATCC 51907 / DSM 11121 / KW20 / Rd)</name>
    <dbReference type="NCBI Taxonomy" id="71421"/>
    <lineage>
        <taxon>Bacteria</taxon>
        <taxon>Pseudomonadati</taxon>
        <taxon>Pseudomonadota</taxon>
        <taxon>Gammaproteobacteria</taxon>
        <taxon>Pasteurellales</taxon>
        <taxon>Pasteurellaceae</taxon>
        <taxon>Haemophilus</taxon>
    </lineage>
</organism>
<evidence type="ECO:0000255" key="1">
    <source>
        <dbReference type="PROSITE-ProRule" id="PRU00169"/>
    </source>
</evidence>
<evidence type="ECO:0000255" key="2">
    <source>
        <dbReference type="PROSITE-ProRule" id="PRU01091"/>
    </source>
</evidence>
<evidence type="ECO:0000305" key="3"/>
<feature type="chain" id="PRO_0000081027" description="Transcriptional regulatory protein QseB">
    <location>
        <begin position="1"/>
        <end position="221"/>
    </location>
</feature>
<feature type="domain" description="Response regulatory" evidence="1">
    <location>
        <begin position="2"/>
        <end position="116"/>
    </location>
</feature>
<feature type="DNA-binding region" description="OmpR/PhoB-type" evidence="2">
    <location>
        <begin position="124"/>
        <end position="218"/>
    </location>
</feature>
<feature type="modified residue" description="4-aspartylphosphate" evidence="1">
    <location>
        <position position="51"/>
    </location>
</feature>
<sequence length="221" mass="24903">MRILLIEDDNLIGNGLQIGLTKLGFAVDWFTDGKTGMAALTSAPYDAVVLDLTLPKLDGLEVLQQWRSNHQDVPVLILTARDTLDERVKGLQSGADDYLCKPFALAEVAARLQALIRRRYGYHHSVIEQAGVKLDQNQRSVWLNNQPISLTSREYKLLELFMLNKDRVLSRSSIEEKLSSWDEEISSGALDVHIYNLRQKLGKQFIRTVHGVGYALGQVEK</sequence>